<proteinExistence type="inferred from homology"/>
<keyword id="KW-0004">4Fe-4S</keyword>
<keyword id="KW-0997">Cell inner membrane</keyword>
<keyword id="KW-1003">Cell membrane</keyword>
<keyword id="KW-0408">Iron</keyword>
<keyword id="KW-0411">Iron-sulfur</keyword>
<keyword id="KW-0472">Membrane</keyword>
<keyword id="KW-0479">Metal-binding</keyword>
<keyword id="KW-0520">NAD</keyword>
<keyword id="KW-0874">Quinone</keyword>
<keyword id="KW-1185">Reference proteome</keyword>
<keyword id="KW-0677">Repeat</keyword>
<keyword id="KW-1278">Translocase</keyword>
<keyword id="KW-0830">Ubiquinone</keyword>
<feature type="chain" id="PRO_0000245723" description="NADH-quinone oxidoreductase subunit I">
    <location>
        <begin position="1"/>
        <end position="176"/>
    </location>
</feature>
<feature type="domain" description="4Fe-4S ferredoxin-type 1" evidence="1">
    <location>
        <begin position="47"/>
        <end position="77"/>
    </location>
</feature>
<feature type="domain" description="4Fe-4S ferredoxin-type 2" evidence="1">
    <location>
        <begin position="87"/>
        <end position="116"/>
    </location>
</feature>
<feature type="binding site" evidence="1">
    <location>
        <position position="57"/>
    </location>
    <ligand>
        <name>[4Fe-4S] cluster</name>
        <dbReference type="ChEBI" id="CHEBI:49883"/>
        <label>1</label>
    </ligand>
</feature>
<feature type="binding site" evidence="1">
    <location>
        <position position="60"/>
    </location>
    <ligand>
        <name>[4Fe-4S] cluster</name>
        <dbReference type="ChEBI" id="CHEBI:49883"/>
        <label>1</label>
    </ligand>
</feature>
<feature type="binding site" evidence="1">
    <location>
        <position position="63"/>
    </location>
    <ligand>
        <name>[4Fe-4S] cluster</name>
        <dbReference type="ChEBI" id="CHEBI:49883"/>
        <label>1</label>
    </ligand>
</feature>
<feature type="binding site" evidence="1">
    <location>
        <position position="67"/>
    </location>
    <ligand>
        <name>[4Fe-4S] cluster</name>
        <dbReference type="ChEBI" id="CHEBI:49883"/>
        <label>2</label>
    </ligand>
</feature>
<feature type="binding site" evidence="1">
    <location>
        <position position="96"/>
    </location>
    <ligand>
        <name>[4Fe-4S] cluster</name>
        <dbReference type="ChEBI" id="CHEBI:49883"/>
        <label>2</label>
    </ligand>
</feature>
<feature type="binding site" evidence="1">
    <location>
        <position position="99"/>
    </location>
    <ligand>
        <name>[4Fe-4S] cluster</name>
        <dbReference type="ChEBI" id="CHEBI:49883"/>
        <label>2</label>
    </ligand>
</feature>
<feature type="binding site" evidence="1">
    <location>
        <position position="102"/>
    </location>
    <ligand>
        <name>[4Fe-4S] cluster</name>
        <dbReference type="ChEBI" id="CHEBI:49883"/>
        <label>2</label>
    </ligand>
</feature>
<feature type="binding site" evidence="1">
    <location>
        <position position="106"/>
    </location>
    <ligand>
        <name>[4Fe-4S] cluster</name>
        <dbReference type="ChEBI" id="CHEBI:49883"/>
        <label>1</label>
    </ligand>
</feature>
<sequence length="176" mass="19995">MSLWKDIKGTILPFWVTLRYLFRRPVTVCYPERKQTPAPRYRGRLVLTRDPDGEERCVACHLCSAACPVDCISMQAAEREDGRRYAAWFRINFSRCIFCGLCTEACPTLALQMTSEYELATRELLQVIYEKDELLIDGCGKNAEYNFYRRAGIGVVAPRGANPGESSPEDVKSNLP</sequence>
<evidence type="ECO:0000255" key="1">
    <source>
        <dbReference type="HAMAP-Rule" id="MF_01351"/>
    </source>
</evidence>
<protein>
    <recommendedName>
        <fullName evidence="1">NADH-quinone oxidoreductase subunit I</fullName>
        <ecNumber evidence="1">7.1.1.-</ecNumber>
    </recommendedName>
    <alternativeName>
        <fullName evidence="1">NADH dehydrogenase I subunit I</fullName>
    </alternativeName>
    <alternativeName>
        <fullName evidence="1">NDH-1 subunit I</fullName>
    </alternativeName>
</protein>
<reference key="1">
    <citation type="submission" date="2005-10" db="EMBL/GenBank/DDBJ databases">
        <title>Complete sequence of Pelobacter carbinolicus DSM 2380.</title>
        <authorList>
            <person name="Copeland A."/>
            <person name="Lucas S."/>
            <person name="Lapidus A."/>
            <person name="Barry K."/>
            <person name="Detter J.C."/>
            <person name="Glavina T."/>
            <person name="Hammon N."/>
            <person name="Israni S."/>
            <person name="Pitluck S."/>
            <person name="Chertkov O."/>
            <person name="Schmutz J."/>
            <person name="Larimer F."/>
            <person name="Land M."/>
            <person name="Kyrpides N."/>
            <person name="Ivanova N."/>
            <person name="Richardson P."/>
        </authorList>
    </citation>
    <scope>NUCLEOTIDE SEQUENCE [LARGE SCALE GENOMIC DNA]</scope>
    <source>
        <strain>DSM 2380 / NBRC 103641 / GraBd1</strain>
    </source>
</reference>
<organism>
    <name type="scientific">Syntrophotalea carbinolica (strain DSM 2380 / NBRC 103641 / GraBd1)</name>
    <name type="common">Pelobacter carbinolicus</name>
    <dbReference type="NCBI Taxonomy" id="338963"/>
    <lineage>
        <taxon>Bacteria</taxon>
        <taxon>Pseudomonadati</taxon>
        <taxon>Thermodesulfobacteriota</taxon>
        <taxon>Desulfuromonadia</taxon>
        <taxon>Desulfuromonadales</taxon>
        <taxon>Syntrophotaleaceae</taxon>
        <taxon>Syntrophotalea</taxon>
    </lineage>
</organism>
<name>NUOI_SYNC1</name>
<comment type="function">
    <text evidence="1">NDH-1 shuttles electrons from NADH, via FMN and iron-sulfur (Fe-S) centers, to quinones in the respiratory chain. The immediate electron acceptor for the enzyme in this species is believed to be ubiquinone. Couples the redox reaction to proton translocation (for every two electrons transferred, four hydrogen ions are translocated across the cytoplasmic membrane), and thus conserves the redox energy in a proton gradient.</text>
</comment>
<comment type="catalytic activity">
    <reaction evidence="1">
        <text>a quinone + NADH + 5 H(+)(in) = a quinol + NAD(+) + 4 H(+)(out)</text>
        <dbReference type="Rhea" id="RHEA:57888"/>
        <dbReference type="ChEBI" id="CHEBI:15378"/>
        <dbReference type="ChEBI" id="CHEBI:24646"/>
        <dbReference type="ChEBI" id="CHEBI:57540"/>
        <dbReference type="ChEBI" id="CHEBI:57945"/>
        <dbReference type="ChEBI" id="CHEBI:132124"/>
    </reaction>
</comment>
<comment type="cofactor">
    <cofactor evidence="1">
        <name>[4Fe-4S] cluster</name>
        <dbReference type="ChEBI" id="CHEBI:49883"/>
    </cofactor>
    <text evidence="1">Binds 2 [4Fe-4S] clusters per subunit.</text>
</comment>
<comment type="subunit">
    <text evidence="1">NDH-1 is composed of 14 different subunits. Subunits NuoA, H, J, K, L, M, N constitute the membrane sector of the complex.</text>
</comment>
<comment type="subcellular location">
    <subcellularLocation>
        <location evidence="1">Cell inner membrane</location>
        <topology evidence="1">Peripheral membrane protein</topology>
    </subcellularLocation>
</comment>
<comment type="similarity">
    <text evidence="1">Belongs to the complex I 23 kDa subunit family.</text>
</comment>
<dbReference type="EC" id="7.1.1.-" evidence="1"/>
<dbReference type="EMBL" id="CP000142">
    <property type="protein sequence ID" value="ABA87472.1"/>
    <property type="molecule type" value="Genomic_DNA"/>
</dbReference>
<dbReference type="RefSeq" id="WP_011339872.1">
    <property type="nucleotide sequence ID" value="NC_007498.2"/>
</dbReference>
<dbReference type="SMR" id="Q3A820"/>
<dbReference type="STRING" id="338963.Pcar_0211"/>
<dbReference type="KEGG" id="pca:Pcar_0211"/>
<dbReference type="eggNOG" id="COG1143">
    <property type="taxonomic scope" value="Bacteria"/>
</dbReference>
<dbReference type="HOGENOM" id="CLU_067218_4_3_7"/>
<dbReference type="OrthoDB" id="9808559at2"/>
<dbReference type="Proteomes" id="UP000002534">
    <property type="component" value="Chromosome"/>
</dbReference>
<dbReference type="GO" id="GO:0005886">
    <property type="term" value="C:plasma membrane"/>
    <property type="evidence" value="ECO:0007669"/>
    <property type="project" value="UniProtKB-SubCell"/>
</dbReference>
<dbReference type="GO" id="GO:0051539">
    <property type="term" value="F:4 iron, 4 sulfur cluster binding"/>
    <property type="evidence" value="ECO:0007669"/>
    <property type="project" value="UniProtKB-KW"/>
</dbReference>
<dbReference type="GO" id="GO:0005506">
    <property type="term" value="F:iron ion binding"/>
    <property type="evidence" value="ECO:0007669"/>
    <property type="project" value="UniProtKB-UniRule"/>
</dbReference>
<dbReference type="GO" id="GO:0050136">
    <property type="term" value="F:NADH:ubiquinone reductase (non-electrogenic) activity"/>
    <property type="evidence" value="ECO:0007669"/>
    <property type="project" value="UniProtKB-UniRule"/>
</dbReference>
<dbReference type="GO" id="GO:0048038">
    <property type="term" value="F:quinone binding"/>
    <property type="evidence" value="ECO:0007669"/>
    <property type="project" value="UniProtKB-KW"/>
</dbReference>
<dbReference type="GO" id="GO:0009060">
    <property type="term" value="P:aerobic respiration"/>
    <property type="evidence" value="ECO:0007669"/>
    <property type="project" value="TreeGrafter"/>
</dbReference>
<dbReference type="Gene3D" id="3.30.70.3270">
    <property type="match status" value="1"/>
</dbReference>
<dbReference type="HAMAP" id="MF_01351">
    <property type="entry name" value="NDH1_NuoI"/>
    <property type="match status" value="1"/>
</dbReference>
<dbReference type="InterPro" id="IPR017896">
    <property type="entry name" value="4Fe4S_Fe-S-bd"/>
</dbReference>
<dbReference type="InterPro" id="IPR017900">
    <property type="entry name" value="4Fe4S_Fe_S_CS"/>
</dbReference>
<dbReference type="InterPro" id="IPR010226">
    <property type="entry name" value="NADH_quinone_OxRdtase_chainI"/>
</dbReference>
<dbReference type="NCBIfam" id="TIGR01971">
    <property type="entry name" value="NuoI"/>
    <property type="match status" value="1"/>
</dbReference>
<dbReference type="NCBIfam" id="NF004536">
    <property type="entry name" value="PRK05888.1-1"/>
    <property type="match status" value="1"/>
</dbReference>
<dbReference type="PANTHER" id="PTHR10849:SF20">
    <property type="entry name" value="NADH DEHYDROGENASE [UBIQUINONE] IRON-SULFUR PROTEIN 8, MITOCHONDRIAL"/>
    <property type="match status" value="1"/>
</dbReference>
<dbReference type="PANTHER" id="PTHR10849">
    <property type="entry name" value="NADH DEHYDROGENASE UBIQUINONE IRON-SULFUR PROTEIN 8, MITOCHONDRIAL"/>
    <property type="match status" value="1"/>
</dbReference>
<dbReference type="Pfam" id="PF12838">
    <property type="entry name" value="Fer4_7"/>
    <property type="match status" value="1"/>
</dbReference>
<dbReference type="SUPFAM" id="SSF54862">
    <property type="entry name" value="4Fe-4S ferredoxins"/>
    <property type="match status" value="1"/>
</dbReference>
<dbReference type="PROSITE" id="PS00198">
    <property type="entry name" value="4FE4S_FER_1"/>
    <property type="match status" value="2"/>
</dbReference>
<dbReference type="PROSITE" id="PS51379">
    <property type="entry name" value="4FE4S_FER_2"/>
    <property type="match status" value="2"/>
</dbReference>
<gene>
    <name evidence="1" type="primary">nuoI</name>
    <name type="ordered locus">Pcar_0211</name>
</gene>
<accession>Q3A820</accession>